<feature type="chain" id="PRO_0000423256" description="Prothymosin alpha">
    <location>
        <begin position="1"/>
        <end position="111"/>
    </location>
</feature>
<feature type="initiator methionine" description="Removed; alternate" evidence="4 6">
    <location>
        <position position="1"/>
    </location>
</feature>
<feature type="chain" id="PRO_0000299251" description="Prothymosin alpha, N-terminally processed">
    <location>
        <begin position="2"/>
        <end position="111"/>
    </location>
</feature>
<feature type="peptide" id="PRO_0000029866" description="Thymosin alpha">
    <location>
        <begin position="2"/>
        <end position="29"/>
    </location>
</feature>
<feature type="region of interest" description="Disordered" evidence="3">
    <location>
        <begin position="1"/>
        <end position="111"/>
    </location>
</feature>
<feature type="compositionally biased region" description="Basic and acidic residues" evidence="3">
    <location>
        <begin position="13"/>
        <end position="31"/>
    </location>
</feature>
<feature type="compositionally biased region" description="Acidic residues" evidence="3">
    <location>
        <begin position="43"/>
        <end position="84"/>
    </location>
</feature>
<feature type="compositionally biased region" description="Basic and acidic residues" evidence="3">
    <location>
        <begin position="101"/>
        <end position="111"/>
    </location>
</feature>
<feature type="modified residue" description="N-acetylmethionine" evidence="2">
    <location>
        <position position="1"/>
    </location>
</feature>
<feature type="modified residue" description="N-acetylserine; in Prothymosin alpha, N-terminally processed" evidence="6">
    <location>
        <position position="2"/>
    </location>
</feature>
<feature type="modified residue" description="Phosphoserine" evidence="1">
    <location>
        <position position="2"/>
    </location>
</feature>
<feature type="modified residue" description="Phosphothreonine" evidence="1">
    <location>
        <position position="8"/>
    </location>
</feature>
<feature type="modified residue" description="Phosphoserine" evidence="2">
    <location>
        <position position="9"/>
    </location>
</feature>
<feature type="modified residue" description="Phosphoserine" evidence="2">
    <location>
        <position position="10"/>
    </location>
</feature>
<feature type="modified residue" description="Phosphothreonine" evidence="1">
    <location>
        <position position="13"/>
    </location>
</feature>
<feature type="modified residue" description="Phosphothreonine" evidence="1">
    <location>
        <position position="14"/>
    </location>
</feature>
<feature type="modified residue" description="N6-acetyllysine; alternate" evidence="6">
    <location>
        <position position="15"/>
    </location>
</feature>
<feature type="modified residue" description="N6-succinyllysine; alternate" evidence="6">
    <location>
        <position position="15"/>
    </location>
</feature>
<feature type="modified residue" description="Phosphothreonine" evidence="2">
    <location>
        <position position="102"/>
    </location>
</feature>
<feature type="modified residue" description="N6-acetyllysine; alternate" evidence="6">
    <location>
        <position position="103"/>
    </location>
</feature>
<feature type="modified residue" description="Phosphothreonine" evidence="2">
    <location>
        <position position="107"/>
    </location>
</feature>
<feature type="cross-link" description="Glycyl lysine isopeptide (Lys-Gly) (interchain with G-Cter in SUMO2); alternate" evidence="2">
    <location>
        <position position="103"/>
    </location>
</feature>
<feature type="sequence conflict" description="In Ref. 4; AA sequence." evidence="5" ref="4">
    <original>K</original>
    <variation>KK</variation>
    <location>
        <position position="106"/>
    </location>
</feature>
<feature type="turn" evidence="7">
    <location>
        <begin position="42"/>
        <end position="44"/>
    </location>
</feature>
<comment type="function">
    <text>Prothymosin alpha may mediate immune function by conferring resistance to certain opportunistic infections.</text>
</comment>
<comment type="subunit">
    <text evidence="2">Interacts with NUPR1; regulates apoptotic process.</text>
</comment>
<comment type="subcellular location">
    <subcellularLocation>
        <location>Nucleus</location>
    </subcellularLocation>
</comment>
<comment type="PTM">
    <text>Covalently linked to a small RNA of about 20 nucleotides.</text>
</comment>
<comment type="similarity">
    <text evidence="5">Belongs to the pro/parathymosin family.</text>
</comment>
<name>PTMA_MOUSE</name>
<organism>
    <name type="scientific">Mus musculus</name>
    <name type="common">Mouse</name>
    <dbReference type="NCBI Taxonomy" id="10090"/>
    <lineage>
        <taxon>Eukaryota</taxon>
        <taxon>Metazoa</taxon>
        <taxon>Chordata</taxon>
        <taxon>Craniata</taxon>
        <taxon>Vertebrata</taxon>
        <taxon>Euteleostomi</taxon>
        <taxon>Mammalia</taxon>
        <taxon>Eutheria</taxon>
        <taxon>Euarchontoglires</taxon>
        <taxon>Glires</taxon>
        <taxon>Rodentia</taxon>
        <taxon>Myomorpha</taxon>
        <taxon>Muroidea</taxon>
        <taxon>Muridae</taxon>
        <taxon>Murinae</taxon>
        <taxon>Mus</taxon>
        <taxon>Mus</taxon>
    </lineage>
</organism>
<protein>
    <recommendedName>
        <fullName>Prothymosin alpha</fullName>
    </recommendedName>
    <component>
        <recommendedName>
            <fullName>Prothymosin alpha, N-terminally processed</fullName>
        </recommendedName>
    </component>
    <component>
        <recommendedName>
            <fullName>Thymosin alpha</fullName>
        </recommendedName>
    </component>
</protein>
<evidence type="ECO:0000250" key="1">
    <source>
        <dbReference type="UniProtKB" id="P01252"/>
    </source>
</evidence>
<evidence type="ECO:0000250" key="2">
    <source>
        <dbReference type="UniProtKB" id="P06454"/>
    </source>
</evidence>
<evidence type="ECO:0000256" key="3">
    <source>
        <dbReference type="SAM" id="MobiDB-lite"/>
    </source>
</evidence>
<evidence type="ECO:0000269" key="4">
    <source>
    </source>
</evidence>
<evidence type="ECO:0000305" key="5"/>
<evidence type="ECO:0007744" key="6">
    <source>
    </source>
</evidence>
<evidence type="ECO:0007829" key="7">
    <source>
        <dbReference type="PDB" id="2Z32"/>
    </source>
</evidence>
<reference key="1">
    <citation type="journal article" date="1991" name="Biochim. Biophys. Acta">
        <title>Nucleotide sequence of the murine prothymosin alpha cDNA and its deduced primary and secondary protein structure.</title>
        <authorList>
            <person name="Schmidt G."/>
            <person name="Werner D."/>
        </authorList>
    </citation>
    <scope>NUCLEOTIDE SEQUENCE [MRNA]</scope>
</reference>
<reference key="2">
    <citation type="journal article" date="2005" name="Science">
        <title>The transcriptional landscape of the mammalian genome.</title>
        <authorList>
            <person name="Carninci P."/>
            <person name="Kasukawa T."/>
            <person name="Katayama S."/>
            <person name="Gough J."/>
            <person name="Frith M.C."/>
            <person name="Maeda N."/>
            <person name="Oyama R."/>
            <person name="Ravasi T."/>
            <person name="Lenhard B."/>
            <person name="Wells C."/>
            <person name="Kodzius R."/>
            <person name="Shimokawa K."/>
            <person name="Bajic V.B."/>
            <person name="Brenner S.E."/>
            <person name="Batalov S."/>
            <person name="Forrest A.R."/>
            <person name="Zavolan M."/>
            <person name="Davis M.J."/>
            <person name="Wilming L.G."/>
            <person name="Aidinis V."/>
            <person name="Allen J.E."/>
            <person name="Ambesi-Impiombato A."/>
            <person name="Apweiler R."/>
            <person name="Aturaliya R.N."/>
            <person name="Bailey T.L."/>
            <person name="Bansal M."/>
            <person name="Baxter L."/>
            <person name="Beisel K.W."/>
            <person name="Bersano T."/>
            <person name="Bono H."/>
            <person name="Chalk A.M."/>
            <person name="Chiu K.P."/>
            <person name="Choudhary V."/>
            <person name="Christoffels A."/>
            <person name="Clutterbuck D.R."/>
            <person name="Crowe M.L."/>
            <person name="Dalla E."/>
            <person name="Dalrymple B.P."/>
            <person name="de Bono B."/>
            <person name="Della Gatta G."/>
            <person name="di Bernardo D."/>
            <person name="Down T."/>
            <person name="Engstrom P."/>
            <person name="Fagiolini M."/>
            <person name="Faulkner G."/>
            <person name="Fletcher C.F."/>
            <person name="Fukushima T."/>
            <person name="Furuno M."/>
            <person name="Futaki S."/>
            <person name="Gariboldi M."/>
            <person name="Georgii-Hemming P."/>
            <person name="Gingeras T.R."/>
            <person name="Gojobori T."/>
            <person name="Green R.E."/>
            <person name="Gustincich S."/>
            <person name="Harbers M."/>
            <person name="Hayashi Y."/>
            <person name="Hensch T.K."/>
            <person name="Hirokawa N."/>
            <person name="Hill D."/>
            <person name="Huminiecki L."/>
            <person name="Iacono M."/>
            <person name="Ikeo K."/>
            <person name="Iwama A."/>
            <person name="Ishikawa T."/>
            <person name="Jakt M."/>
            <person name="Kanapin A."/>
            <person name="Katoh M."/>
            <person name="Kawasawa Y."/>
            <person name="Kelso J."/>
            <person name="Kitamura H."/>
            <person name="Kitano H."/>
            <person name="Kollias G."/>
            <person name="Krishnan S.P."/>
            <person name="Kruger A."/>
            <person name="Kummerfeld S.K."/>
            <person name="Kurochkin I.V."/>
            <person name="Lareau L.F."/>
            <person name="Lazarevic D."/>
            <person name="Lipovich L."/>
            <person name="Liu J."/>
            <person name="Liuni S."/>
            <person name="McWilliam S."/>
            <person name="Madan Babu M."/>
            <person name="Madera M."/>
            <person name="Marchionni L."/>
            <person name="Matsuda H."/>
            <person name="Matsuzawa S."/>
            <person name="Miki H."/>
            <person name="Mignone F."/>
            <person name="Miyake S."/>
            <person name="Morris K."/>
            <person name="Mottagui-Tabar S."/>
            <person name="Mulder N."/>
            <person name="Nakano N."/>
            <person name="Nakauchi H."/>
            <person name="Ng P."/>
            <person name="Nilsson R."/>
            <person name="Nishiguchi S."/>
            <person name="Nishikawa S."/>
            <person name="Nori F."/>
            <person name="Ohara O."/>
            <person name="Okazaki Y."/>
            <person name="Orlando V."/>
            <person name="Pang K.C."/>
            <person name="Pavan W.J."/>
            <person name="Pavesi G."/>
            <person name="Pesole G."/>
            <person name="Petrovsky N."/>
            <person name="Piazza S."/>
            <person name="Reed J."/>
            <person name="Reid J.F."/>
            <person name="Ring B.Z."/>
            <person name="Ringwald M."/>
            <person name="Rost B."/>
            <person name="Ruan Y."/>
            <person name="Salzberg S.L."/>
            <person name="Sandelin A."/>
            <person name="Schneider C."/>
            <person name="Schoenbach C."/>
            <person name="Sekiguchi K."/>
            <person name="Semple C.A."/>
            <person name="Seno S."/>
            <person name="Sessa L."/>
            <person name="Sheng Y."/>
            <person name="Shibata Y."/>
            <person name="Shimada H."/>
            <person name="Shimada K."/>
            <person name="Silva D."/>
            <person name="Sinclair B."/>
            <person name="Sperling S."/>
            <person name="Stupka E."/>
            <person name="Sugiura K."/>
            <person name="Sultana R."/>
            <person name="Takenaka Y."/>
            <person name="Taki K."/>
            <person name="Tammoja K."/>
            <person name="Tan S.L."/>
            <person name="Tang S."/>
            <person name="Taylor M.S."/>
            <person name="Tegner J."/>
            <person name="Teichmann S.A."/>
            <person name="Ueda H.R."/>
            <person name="van Nimwegen E."/>
            <person name="Verardo R."/>
            <person name="Wei C.L."/>
            <person name="Yagi K."/>
            <person name="Yamanishi H."/>
            <person name="Zabarovsky E."/>
            <person name="Zhu S."/>
            <person name="Zimmer A."/>
            <person name="Hide W."/>
            <person name="Bult C."/>
            <person name="Grimmond S.M."/>
            <person name="Teasdale R.D."/>
            <person name="Liu E.T."/>
            <person name="Brusic V."/>
            <person name="Quackenbush J."/>
            <person name="Wahlestedt C."/>
            <person name="Mattick J.S."/>
            <person name="Hume D.A."/>
            <person name="Kai C."/>
            <person name="Sasaki D."/>
            <person name="Tomaru Y."/>
            <person name="Fukuda S."/>
            <person name="Kanamori-Katayama M."/>
            <person name="Suzuki M."/>
            <person name="Aoki J."/>
            <person name="Arakawa T."/>
            <person name="Iida J."/>
            <person name="Imamura K."/>
            <person name="Itoh M."/>
            <person name="Kato T."/>
            <person name="Kawaji H."/>
            <person name="Kawagashira N."/>
            <person name="Kawashima T."/>
            <person name="Kojima M."/>
            <person name="Kondo S."/>
            <person name="Konno H."/>
            <person name="Nakano K."/>
            <person name="Ninomiya N."/>
            <person name="Nishio T."/>
            <person name="Okada M."/>
            <person name="Plessy C."/>
            <person name="Shibata K."/>
            <person name="Shiraki T."/>
            <person name="Suzuki S."/>
            <person name="Tagami M."/>
            <person name="Waki K."/>
            <person name="Watahiki A."/>
            <person name="Okamura-Oho Y."/>
            <person name="Suzuki H."/>
            <person name="Kawai J."/>
            <person name="Hayashizaki Y."/>
        </authorList>
    </citation>
    <scope>NUCLEOTIDE SEQUENCE [LARGE SCALE MRNA]</scope>
    <source>
        <strain>C57BL/6J</strain>
        <strain>NOD</strain>
        <tissue>Eye</tissue>
        <tissue>Thymus</tissue>
    </source>
</reference>
<reference key="3">
    <citation type="journal article" date="2004" name="Genome Res.">
        <title>The status, quality, and expansion of the NIH full-length cDNA project: the Mammalian Gene Collection (MGC).</title>
        <authorList>
            <consortium name="The MGC Project Team"/>
        </authorList>
    </citation>
    <scope>NUCLEOTIDE SEQUENCE [LARGE SCALE MRNA]</scope>
    <source>
        <strain>C57BL/6J</strain>
        <tissue>Brain</tissue>
        <tissue>Limb</tissue>
    </source>
</reference>
<reference key="4">
    <citation type="journal article" date="1990" name="FEBS Lett.">
        <title>Depression of prothymosin alpha production in murine thymus correlates with staphylococcal enterotoxin-B-induced immunosuppression.</title>
        <authorList>
            <person name="Low T.L.K."/>
            <person name="Pan T.L."/>
            <person name="Lin Y.S."/>
        </authorList>
    </citation>
    <scope>PROTEIN SEQUENCE OF 2-111</scope>
</reference>
<reference key="5">
    <citation type="journal article" date="1989" name="FEBS Lett.">
        <title>Prothymosin alpha is an evolutionary conserved protein covalently linked to a small RNA.</title>
        <authorList>
            <person name="Makarova T."/>
            <person name="Grebenshikov N."/>
            <person name="Egorov C."/>
            <person name="Vartapetian A."/>
            <person name="Bogdanov A."/>
        </authorList>
    </citation>
    <scope>PROTEIN SEQUENCE OF 15-18; 22-68 AND 91-103</scope>
</reference>
<reference key="6">
    <citation type="journal article" date="2009" name="Mol. Cell. Proteomics">
        <title>Large scale localization of protein phosphorylation by use of electron capture dissociation mass spectrometry.</title>
        <authorList>
            <person name="Sweet S.M."/>
            <person name="Bailey C.M."/>
            <person name="Cunningham D.L."/>
            <person name="Heath J.K."/>
            <person name="Cooper H.J."/>
        </authorList>
    </citation>
    <scope>IDENTIFICATION BY MASS SPECTROMETRY [LARGE SCALE ANALYSIS]</scope>
    <source>
        <tissue>Embryonic fibroblast</tissue>
    </source>
</reference>
<reference key="7">
    <citation type="journal article" date="2010" name="Cell">
        <title>A tissue-specific atlas of mouse protein phosphorylation and expression.</title>
        <authorList>
            <person name="Huttlin E.L."/>
            <person name="Jedrychowski M.P."/>
            <person name="Elias J.E."/>
            <person name="Goswami T."/>
            <person name="Rad R."/>
            <person name="Beausoleil S.A."/>
            <person name="Villen J."/>
            <person name="Haas W."/>
            <person name="Sowa M.E."/>
            <person name="Gygi S.P."/>
        </authorList>
    </citation>
    <scope>IDENTIFICATION BY MASS SPECTROMETRY [LARGE SCALE ANALYSIS]</scope>
    <source>
        <tissue>Brain</tissue>
        <tissue>Brown adipose tissue</tissue>
        <tissue>Heart</tissue>
        <tissue>Kidney</tissue>
        <tissue>Liver</tissue>
        <tissue>Lung</tissue>
        <tissue>Pancreas</tissue>
        <tissue>Spleen</tissue>
        <tissue>Testis</tissue>
    </source>
</reference>
<reference key="8">
    <citation type="journal article" date="2013" name="Mol. Cell">
        <title>SIRT5-mediated lysine desuccinylation impacts diverse metabolic pathways.</title>
        <authorList>
            <person name="Park J."/>
            <person name="Chen Y."/>
            <person name="Tishkoff D.X."/>
            <person name="Peng C."/>
            <person name="Tan M."/>
            <person name="Dai L."/>
            <person name="Xie Z."/>
            <person name="Zhang Y."/>
            <person name="Zwaans B.M."/>
            <person name="Skinner M.E."/>
            <person name="Lombard D.B."/>
            <person name="Zhao Y."/>
        </authorList>
    </citation>
    <scope>ACETYLATION [LARGE SCALE ANALYSIS] AT SER-2; LYS-15 AND LYS-103</scope>
    <scope>SUCCINYLATION [LARGE SCALE ANALYSIS] AT LYS-15</scope>
    <scope>CLEAVAGE OF INITIATOR METHIONINE [LARGE SCALE ANALYSIS]</scope>
    <scope>IDENTIFICATION BY MASS SPECTROMETRY [LARGE SCALE ANALYSIS]</scope>
    <source>
        <tissue>Embryonic fibroblast</tissue>
    </source>
</reference>
<sequence length="111" mass="12254">MSDAAVDTSSEITTKDLKEKKEVVEEAENGRDAPANGNAQNEENGEQEADNEVDEEEEEGGEEEEEEEEGDGEEEDGDEDEEAEAPTGKRVAEDDEDDDVDTKKQKTEEDD</sequence>
<gene>
    <name type="primary">Ptma</name>
</gene>
<accession>P26350</accession>
<accession>Q3UQV6</accession>
<keyword id="KW-0002">3D-structure</keyword>
<keyword id="KW-0007">Acetylation</keyword>
<keyword id="KW-0903">Direct protein sequencing</keyword>
<keyword id="KW-1017">Isopeptide bond</keyword>
<keyword id="KW-0539">Nucleus</keyword>
<keyword id="KW-0597">Phosphoprotein</keyword>
<keyword id="KW-1185">Reference proteome</keyword>
<keyword id="KW-0832">Ubl conjugation</keyword>
<proteinExistence type="evidence at protein level"/>
<dbReference type="EMBL" id="X56135">
    <property type="protein sequence ID" value="CAA39601.1"/>
    <property type="molecule type" value="mRNA"/>
</dbReference>
<dbReference type="EMBL" id="AK037980">
    <property type="protein sequence ID" value="BAC29913.1"/>
    <property type="molecule type" value="mRNA"/>
</dbReference>
<dbReference type="EMBL" id="AK084218">
    <property type="protein sequence ID" value="BAC39141.1"/>
    <property type="molecule type" value="mRNA"/>
</dbReference>
<dbReference type="EMBL" id="AK132003">
    <property type="protein sequence ID" value="BAE20932.1"/>
    <property type="molecule type" value="mRNA"/>
</dbReference>
<dbReference type="EMBL" id="AK142076">
    <property type="protein sequence ID" value="BAE24932.1"/>
    <property type="molecule type" value="mRNA"/>
</dbReference>
<dbReference type="EMBL" id="AK145650">
    <property type="protein sequence ID" value="BAE26566.1"/>
    <property type="molecule type" value="mRNA"/>
</dbReference>
<dbReference type="EMBL" id="AK153953">
    <property type="protein sequence ID" value="BAE32276.1"/>
    <property type="molecule type" value="mRNA"/>
</dbReference>
<dbReference type="EMBL" id="BC081453">
    <property type="protein sequence ID" value="AAH81453.1"/>
    <property type="molecule type" value="mRNA"/>
</dbReference>
<dbReference type="EMBL" id="BC083135">
    <property type="protein sequence ID" value="AAH83135.1"/>
    <property type="molecule type" value="mRNA"/>
</dbReference>
<dbReference type="CCDS" id="CCDS35649.1"/>
<dbReference type="PIR" id="S15073">
    <property type="entry name" value="S15073"/>
</dbReference>
<dbReference type="RefSeq" id="NP_032998.1">
    <property type="nucleotide sequence ID" value="NM_008972.4"/>
</dbReference>
<dbReference type="PDB" id="2Z32">
    <property type="method" value="X-ray"/>
    <property type="resolution" value="2.00 A"/>
    <property type="chains" value="B=39-54"/>
</dbReference>
<dbReference type="PDBsum" id="2Z32"/>
<dbReference type="BMRB" id="P26350"/>
<dbReference type="SMR" id="P26350"/>
<dbReference type="BioGRID" id="202469">
    <property type="interactions" value="20"/>
</dbReference>
<dbReference type="ELM" id="P26350"/>
<dbReference type="FunCoup" id="P26350">
    <property type="interactions" value="2680"/>
</dbReference>
<dbReference type="IntAct" id="P26350">
    <property type="interactions" value="1"/>
</dbReference>
<dbReference type="STRING" id="10090.ENSMUSP00000044188"/>
<dbReference type="GlyGen" id="P26350">
    <property type="glycosylation" value="2 sites, 1 O-linked glycan (2 sites)"/>
</dbReference>
<dbReference type="iPTMnet" id="P26350"/>
<dbReference type="PhosphoSitePlus" id="P26350"/>
<dbReference type="jPOST" id="P26350"/>
<dbReference type="PaxDb" id="10090-ENSMUSP00000044188"/>
<dbReference type="PeptideAtlas" id="P26350"/>
<dbReference type="ProteomicsDB" id="301957"/>
<dbReference type="Pumba" id="P26350"/>
<dbReference type="TopDownProteomics" id="P26350"/>
<dbReference type="DNASU" id="19231"/>
<dbReference type="Ensembl" id="ENSMUST00000045897.15">
    <property type="protein sequence ID" value="ENSMUSP00000044188.9"/>
    <property type="gene ID" value="ENSMUSG00000026238.15"/>
</dbReference>
<dbReference type="GeneID" id="19231"/>
<dbReference type="KEGG" id="mmu:19231"/>
<dbReference type="UCSC" id="uc007bvp.1">
    <property type="organism name" value="mouse"/>
</dbReference>
<dbReference type="AGR" id="MGI:97803"/>
<dbReference type="CTD" id="5757"/>
<dbReference type="MGI" id="MGI:97803">
    <property type="gene designation" value="Ptma"/>
</dbReference>
<dbReference type="VEuPathDB" id="HostDB:ENSMUSG00000026238"/>
<dbReference type="eggNOG" id="ENOG502S55T">
    <property type="taxonomic scope" value="Eukaryota"/>
</dbReference>
<dbReference type="GeneTree" id="ENSGT01020000232226"/>
<dbReference type="InParanoid" id="P26350"/>
<dbReference type="OMA" id="DNENEYT"/>
<dbReference type="TreeFam" id="TF350357"/>
<dbReference type="BioGRID-ORCS" id="19231">
    <property type="hits" value="17 hits in 76 CRISPR screens"/>
</dbReference>
<dbReference type="ChiTaRS" id="Ptma">
    <property type="organism name" value="mouse"/>
</dbReference>
<dbReference type="EvolutionaryTrace" id="P26350"/>
<dbReference type="PRO" id="PR:P26350"/>
<dbReference type="Proteomes" id="UP000000589">
    <property type="component" value="Chromosome 1"/>
</dbReference>
<dbReference type="RNAct" id="P26350">
    <property type="molecule type" value="protein"/>
</dbReference>
<dbReference type="Bgee" id="ENSMUSG00000026238">
    <property type="expression patterns" value="Expressed in epiblast (generic) and 125 other cell types or tissues"/>
</dbReference>
<dbReference type="ExpressionAtlas" id="P26350">
    <property type="expression patterns" value="baseline and differential"/>
</dbReference>
<dbReference type="GO" id="GO:0005829">
    <property type="term" value="C:cytosol"/>
    <property type="evidence" value="ECO:0007669"/>
    <property type="project" value="Ensembl"/>
</dbReference>
<dbReference type="GO" id="GO:0005654">
    <property type="term" value="C:nucleoplasm"/>
    <property type="evidence" value="ECO:0007669"/>
    <property type="project" value="Ensembl"/>
</dbReference>
<dbReference type="GO" id="GO:0140297">
    <property type="term" value="F:DNA-binding transcription factor binding"/>
    <property type="evidence" value="ECO:0007669"/>
    <property type="project" value="Ensembl"/>
</dbReference>
<dbReference type="GO" id="GO:0042393">
    <property type="term" value="F:histone binding"/>
    <property type="evidence" value="ECO:0000314"/>
    <property type="project" value="MGI"/>
</dbReference>
<dbReference type="GO" id="GO:0140713">
    <property type="term" value="F:histone chaperone activity"/>
    <property type="evidence" value="ECO:0000314"/>
    <property type="project" value="MGI"/>
</dbReference>
<dbReference type="GO" id="GO:0006325">
    <property type="term" value="P:chromatin organization"/>
    <property type="evidence" value="ECO:0000314"/>
    <property type="project" value="MGI"/>
</dbReference>
<dbReference type="GO" id="GO:0043066">
    <property type="term" value="P:negative regulation of apoptotic process"/>
    <property type="evidence" value="ECO:0000250"/>
    <property type="project" value="UniProtKB"/>
</dbReference>
<dbReference type="IDEAL" id="IID50035"/>
<dbReference type="InterPro" id="IPR004931">
    <property type="entry name" value="Pro/parathymosin"/>
</dbReference>
<dbReference type="PANTHER" id="PTHR22745">
    <property type="entry name" value="PROTHYMOSIN ALPHA"/>
    <property type="match status" value="1"/>
</dbReference>
<dbReference type="PANTHER" id="PTHR22745:SF0">
    <property type="entry name" value="PROTHYMOSIN ALPHA"/>
    <property type="match status" value="1"/>
</dbReference>
<dbReference type="Pfam" id="PF03247">
    <property type="entry name" value="Prothymosin"/>
    <property type="match status" value="1"/>
</dbReference>